<gene>
    <name evidence="1" type="primary">rimP</name>
    <name type="ordered locus">HY04AAS1_1626</name>
</gene>
<feature type="chain" id="PRO_1000136772" description="Ribosome maturation factor RimP">
    <location>
        <begin position="1"/>
        <end position="154"/>
    </location>
</feature>
<sequence length="154" mass="17880">MLDAKKIATTVKDLVKPISDNLGFRLFDVEFKPENGWVLRIIIDKEGGVTIDDCEELSKRVSALLDVEDVITSSYFLEVSSPGLTRELKEKWHYEFFKGKYARLYLKEKIDNKQEYAGYIDSVEDDTLVLRLLDKTLKIPFDKIAKARLDVEKW</sequence>
<comment type="function">
    <text evidence="1">Required for maturation of 30S ribosomal subunits.</text>
</comment>
<comment type="subcellular location">
    <subcellularLocation>
        <location evidence="1">Cytoplasm</location>
    </subcellularLocation>
</comment>
<comment type="similarity">
    <text evidence="1">Belongs to the RimP family.</text>
</comment>
<reference key="1">
    <citation type="journal article" date="2009" name="J. Bacteriol.">
        <title>Complete and draft genome sequences of six members of the Aquificales.</title>
        <authorList>
            <person name="Reysenbach A.-L."/>
            <person name="Hamamura N."/>
            <person name="Podar M."/>
            <person name="Griffiths E."/>
            <person name="Ferreira S."/>
            <person name="Hochstein R."/>
            <person name="Heidelberg J."/>
            <person name="Johnson J."/>
            <person name="Mead D."/>
            <person name="Pohorille A."/>
            <person name="Sarmiento M."/>
            <person name="Schweighofer K."/>
            <person name="Seshadri R."/>
            <person name="Voytek M.A."/>
        </authorList>
    </citation>
    <scope>NUCLEOTIDE SEQUENCE [LARGE SCALE GENOMIC DNA]</scope>
    <source>
        <strain>Y04AAS1</strain>
    </source>
</reference>
<evidence type="ECO:0000255" key="1">
    <source>
        <dbReference type="HAMAP-Rule" id="MF_01077"/>
    </source>
</evidence>
<name>RIMP_HYDS0</name>
<protein>
    <recommendedName>
        <fullName evidence="1">Ribosome maturation factor RimP</fullName>
    </recommendedName>
</protein>
<proteinExistence type="inferred from homology"/>
<keyword id="KW-0963">Cytoplasm</keyword>
<keyword id="KW-0690">Ribosome biogenesis</keyword>
<organism>
    <name type="scientific">Hydrogenobaculum sp. (strain Y04AAS1)</name>
    <dbReference type="NCBI Taxonomy" id="380749"/>
    <lineage>
        <taxon>Bacteria</taxon>
        <taxon>Pseudomonadati</taxon>
        <taxon>Aquificota</taxon>
        <taxon>Aquificia</taxon>
        <taxon>Aquificales</taxon>
        <taxon>Aquificaceae</taxon>
        <taxon>Hydrogenobaculum</taxon>
    </lineage>
</organism>
<dbReference type="EMBL" id="CP001130">
    <property type="protein sequence ID" value="ACG58307.1"/>
    <property type="molecule type" value="Genomic_DNA"/>
</dbReference>
<dbReference type="RefSeq" id="WP_012514661.1">
    <property type="nucleotide sequence ID" value="NC_011126.1"/>
</dbReference>
<dbReference type="SMR" id="B4U6H1"/>
<dbReference type="STRING" id="380749.HY04AAS1_1626"/>
<dbReference type="KEGG" id="hya:HY04AAS1_1626"/>
<dbReference type="eggNOG" id="COG0779">
    <property type="taxonomic scope" value="Bacteria"/>
</dbReference>
<dbReference type="HOGENOM" id="CLU_070525_2_2_0"/>
<dbReference type="OrthoDB" id="9805006at2"/>
<dbReference type="GO" id="GO:0005829">
    <property type="term" value="C:cytosol"/>
    <property type="evidence" value="ECO:0007669"/>
    <property type="project" value="TreeGrafter"/>
</dbReference>
<dbReference type="GO" id="GO:0000028">
    <property type="term" value="P:ribosomal small subunit assembly"/>
    <property type="evidence" value="ECO:0007669"/>
    <property type="project" value="TreeGrafter"/>
</dbReference>
<dbReference type="GO" id="GO:0006412">
    <property type="term" value="P:translation"/>
    <property type="evidence" value="ECO:0007669"/>
    <property type="project" value="TreeGrafter"/>
</dbReference>
<dbReference type="CDD" id="cd01734">
    <property type="entry name" value="YlxS_C"/>
    <property type="match status" value="1"/>
</dbReference>
<dbReference type="FunFam" id="3.30.300.70:FF:000001">
    <property type="entry name" value="Ribosome maturation factor RimP"/>
    <property type="match status" value="1"/>
</dbReference>
<dbReference type="Gene3D" id="2.30.30.180">
    <property type="entry name" value="Ribosome maturation factor RimP, C-terminal domain"/>
    <property type="match status" value="1"/>
</dbReference>
<dbReference type="Gene3D" id="3.30.300.70">
    <property type="entry name" value="RimP-like superfamily, N-terminal"/>
    <property type="match status" value="1"/>
</dbReference>
<dbReference type="HAMAP" id="MF_01077">
    <property type="entry name" value="RimP"/>
    <property type="match status" value="1"/>
</dbReference>
<dbReference type="InterPro" id="IPR003728">
    <property type="entry name" value="Ribosome_maturation_RimP"/>
</dbReference>
<dbReference type="InterPro" id="IPR028998">
    <property type="entry name" value="RimP_C"/>
</dbReference>
<dbReference type="InterPro" id="IPR036847">
    <property type="entry name" value="RimP_C_sf"/>
</dbReference>
<dbReference type="InterPro" id="IPR028989">
    <property type="entry name" value="RimP_N"/>
</dbReference>
<dbReference type="InterPro" id="IPR035956">
    <property type="entry name" value="RimP_N_sf"/>
</dbReference>
<dbReference type="PANTHER" id="PTHR33867">
    <property type="entry name" value="RIBOSOME MATURATION FACTOR RIMP"/>
    <property type="match status" value="1"/>
</dbReference>
<dbReference type="PANTHER" id="PTHR33867:SF1">
    <property type="entry name" value="RIBOSOME MATURATION FACTOR RIMP"/>
    <property type="match status" value="1"/>
</dbReference>
<dbReference type="Pfam" id="PF17384">
    <property type="entry name" value="DUF150_C"/>
    <property type="match status" value="1"/>
</dbReference>
<dbReference type="Pfam" id="PF02576">
    <property type="entry name" value="RimP_N"/>
    <property type="match status" value="1"/>
</dbReference>
<dbReference type="SUPFAM" id="SSF74942">
    <property type="entry name" value="YhbC-like, C-terminal domain"/>
    <property type="match status" value="1"/>
</dbReference>
<dbReference type="SUPFAM" id="SSF75420">
    <property type="entry name" value="YhbC-like, N-terminal domain"/>
    <property type="match status" value="1"/>
</dbReference>
<accession>B4U6H1</accession>